<keyword id="KW-1185">Reference proteome</keyword>
<sequence>MSDDQQNGKQNTTTTTSTPTEQDDIEEKLFRHQLTEFYSANGTFLKNSSLESIIMESIGIQSNNNNNNNNDSVNNNSNNNINNSNYNNNNNNIGGNIGTIGSINSINSDMNDIKLGDMLNMGNVLNSGSGLQTRLKRKEILQQPTTPPISTEPTRTYDVFYDKDLDYHKTLRLFNKRLFLHCLRQKALSLKDSIQNSEESDTSSHSSIQSNDHRPLKKQKITTTIKKVKDSSPTLEESSLISKKKSPSSSSSSSSLINSPTTSKETSPVKDTKPTINPKSLFGLSSTIPLIPRVKTEKEKEKEKEIEKEKEKEKEKEKEKEKEKEKEIEKEREKEKEREREREREREREREREREREREREREKEKEKEREREREREREREREREKEFEKERREREKEREREKLNITKDKEKQVIRETTIDETLNKETPHKPTPHITTKKSPNLTPPISSTASPPSVTTYSSLIPSIPTPQSAAATTTTPSSATLTAVSATIPTPTLTPTLSSPTSTSPTTATTLASNNSTITSTTNVNNNNNNNNNNNNNNNNNNNNNNNNNNKFSTPDDFKSLNWIPFLKEDNQQVSEKELLERRMDINQSKQLLLQVINSLNQERTIIEKKLLSDFKNSNTNSSKQ</sequence>
<reference key="1">
    <citation type="journal article" date="2002" name="Nature">
        <title>Sequence and analysis of chromosome 2 of Dictyostelium discoideum.</title>
        <authorList>
            <person name="Gloeckner G."/>
            <person name="Eichinger L."/>
            <person name="Szafranski K."/>
            <person name="Pachebat J.A."/>
            <person name="Bankier A.T."/>
            <person name="Dear P.H."/>
            <person name="Lehmann R."/>
            <person name="Baumgart C."/>
            <person name="Parra G."/>
            <person name="Abril J.F."/>
            <person name="Guigo R."/>
            <person name="Kumpf K."/>
            <person name="Tunggal B."/>
            <person name="Cox E.C."/>
            <person name="Quail M.A."/>
            <person name="Platzer M."/>
            <person name="Rosenthal A."/>
            <person name="Noegel A.A."/>
        </authorList>
    </citation>
    <scope>NUCLEOTIDE SEQUENCE [LARGE SCALE GENOMIC DNA]</scope>
    <source>
        <strain>AX4</strain>
    </source>
</reference>
<reference key="2">
    <citation type="journal article" date="2005" name="Nature">
        <title>The genome of the social amoeba Dictyostelium discoideum.</title>
        <authorList>
            <person name="Eichinger L."/>
            <person name="Pachebat J.A."/>
            <person name="Gloeckner G."/>
            <person name="Rajandream M.A."/>
            <person name="Sucgang R."/>
            <person name="Berriman M."/>
            <person name="Song J."/>
            <person name="Olsen R."/>
            <person name="Szafranski K."/>
            <person name="Xu Q."/>
            <person name="Tunggal B."/>
            <person name="Kummerfeld S."/>
            <person name="Madera M."/>
            <person name="Konfortov B.A."/>
            <person name="Rivero F."/>
            <person name="Bankier A.T."/>
            <person name="Lehmann R."/>
            <person name="Hamlin N."/>
            <person name="Davies R."/>
            <person name="Gaudet P."/>
            <person name="Fey P."/>
            <person name="Pilcher K."/>
            <person name="Chen G."/>
            <person name="Saunders D."/>
            <person name="Sodergren E.J."/>
            <person name="Davis P."/>
            <person name="Kerhornou A."/>
            <person name="Nie X."/>
            <person name="Hall N."/>
            <person name="Anjard C."/>
            <person name="Hemphill L."/>
            <person name="Bason N."/>
            <person name="Farbrother P."/>
            <person name="Desany B."/>
            <person name="Just E."/>
            <person name="Morio T."/>
            <person name="Rost R."/>
            <person name="Churcher C.M."/>
            <person name="Cooper J."/>
            <person name="Haydock S."/>
            <person name="van Driessche N."/>
            <person name="Cronin A."/>
            <person name="Goodhead I."/>
            <person name="Muzny D.M."/>
            <person name="Mourier T."/>
            <person name="Pain A."/>
            <person name="Lu M."/>
            <person name="Harper D."/>
            <person name="Lindsay R."/>
            <person name="Hauser H."/>
            <person name="James K.D."/>
            <person name="Quiles M."/>
            <person name="Madan Babu M."/>
            <person name="Saito T."/>
            <person name="Buchrieser C."/>
            <person name="Wardroper A."/>
            <person name="Felder M."/>
            <person name="Thangavelu M."/>
            <person name="Johnson D."/>
            <person name="Knights A."/>
            <person name="Loulseged H."/>
            <person name="Mungall K.L."/>
            <person name="Oliver K."/>
            <person name="Price C."/>
            <person name="Quail M.A."/>
            <person name="Urushihara H."/>
            <person name="Hernandez J."/>
            <person name="Rabbinowitsch E."/>
            <person name="Steffen D."/>
            <person name="Sanders M."/>
            <person name="Ma J."/>
            <person name="Kohara Y."/>
            <person name="Sharp S."/>
            <person name="Simmonds M.N."/>
            <person name="Spiegler S."/>
            <person name="Tivey A."/>
            <person name="Sugano S."/>
            <person name="White B."/>
            <person name="Walker D."/>
            <person name="Woodward J.R."/>
            <person name="Winckler T."/>
            <person name="Tanaka Y."/>
            <person name="Shaulsky G."/>
            <person name="Schleicher M."/>
            <person name="Weinstock G.M."/>
            <person name="Rosenthal A."/>
            <person name="Cox E.C."/>
            <person name="Chisholm R.L."/>
            <person name="Gibbs R.A."/>
            <person name="Loomis W.F."/>
            <person name="Platzer M."/>
            <person name="Kay R.R."/>
            <person name="Williams J.G."/>
            <person name="Dear P.H."/>
            <person name="Noegel A.A."/>
            <person name="Barrell B.G."/>
            <person name="Kuspa A."/>
        </authorList>
    </citation>
    <scope>NUCLEOTIDE SEQUENCE [LARGE SCALE GENOMIC DNA]</scope>
    <source>
        <strain>AX4</strain>
    </source>
</reference>
<evidence type="ECO:0000256" key="1">
    <source>
        <dbReference type="SAM" id="MobiDB-lite"/>
    </source>
</evidence>
<protein>
    <recommendedName>
        <fullName>Putative uncharacterized protein DDB_G0271982</fullName>
    </recommendedName>
</protein>
<accession>Q86AH4</accession>
<accession>Q55AB1</accession>
<name>Y8592_DICDI</name>
<gene>
    <name type="ORF">DDB_G0271982</name>
</gene>
<dbReference type="EMBL" id="AAFI02000007">
    <property type="protein sequence ID" value="EAL71425.1"/>
    <property type="molecule type" value="Genomic_DNA"/>
</dbReference>
<dbReference type="RefSeq" id="XP_645355.1">
    <property type="nucleotide sequence ID" value="XM_640263.1"/>
</dbReference>
<dbReference type="FunCoup" id="Q86AH4">
    <property type="interactions" value="9"/>
</dbReference>
<dbReference type="PaxDb" id="44689-DDB0168592"/>
<dbReference type="EnsemblProtists" id="EAL71425">
    <property type="protein sequence ID" value="EAL71425"/>
    <property type="gene ID" value="DDB_G0271982"/>
</dbReference>
<dbReference type="GeneID" id="8618244"/>
<dbReference type="KEGG" id="ddi:DDB_G0271982"/>
<dbReference type="dictyBase" id="DDB_G0271982"/>
<dbReference type="VEuPathDB" id="AmoebaDB:DDB_G0271982"/>
<dbReference type="eggNOG" id="ENOG502RIE5">
    <property type="taxonomic scope" value="Eukaryota"/>
</dbReference>
<dbReference type="HOGENOM" id="CLU_435080_0_0_1"/>
<dbReference type="InParanoid" id="Q86AH4"/>
<dbReference type="OMA" id="FYIANGS"/>
<dbReference type="PRO" id="PR:Q86AH4"/>
<dbReference type="Proteomes" id="UP000002195">
    <property type="component" value="Chromosome 2"/>
</dbReference>
<dbReference type="GO" id="GO:0035267">
    <property type="term" value="C:NuA4 histone acetyltransferase complex"/>
    <property type="evidence" value="ECO:0000318"/>
    <property type="project" value="GO_Central"/>
</dbReference>
<dbReference type="GO" id="GO:0005634">
    <property type="term" value="C:nucleus"/>
    <property type="evidence" value="ECO:0000318"/>
    <property type="project" value="GO_Central"/>
</dbReference>
<dbReference type="GO" id="GO:0042393">
    <property type="term" value="F:histone binding"/>
    <property type="evidence" value="ECO:0000318"/>
    <property type="project" value="GO_Central"/>
</dbReference>
<dbReference type="GO" id="GO:0006338">
    <property type="term" value="P:chromatin remodeling"/>
    <property type="evidence" value="ECO:0000318"/>
    <property type="project" value="GO_Central"/>
</dbReference>
<dbReference type="GO" id="GO:0006357">
    <property type="term" value="P:regulation of transcription by RNA polymerase II"/>
    <property type="evidence" value="ECO:0000318"/>
    <property type="project" value="GO_Central"/>
</dbReference>
<dbReference type="PANTHER" id="PTHR48147">
    <property type="entry name" value="PROTEIN CBG23787"/>
    <property type="match status" value="1"/>
</dbReference>
<organism>
    <name type="scientific">Dictyostelium discoideum</name>
    <name type="common">Social amoeba</name>
    <dbReference type="NCBI Taxonomy" id="44689"/>
    <lineage>
        <taxon>Eukaryota</taxon>
        <taxon>Amoebozoa</taxon>
        <taxon>Evosea</taxon>
        <taxon>Eumycetozoa</taxon>
        <taxon>Dictyostelia</taxon>
        <taxon>Dictyosteliales</taxon>
        <taxon>Dictyosteliaceae</taxon>
        <taxon>Dictyostelium</taxon>
    </lineage>
</organism>
<feature type="chain" id="PRO_0000348166" description="Putative uncharacterized protein DDB_G0271982">
    <location>
        <begin position="1"/>
        <end position="629"/>
    </location>
</feature>
<feature type="region of interest" description="Disordered" evidence="1">
    <location>
        <begin position="1"/>
        <end position="24"/>
    </location>
</feature>
<feature type="region of interest" description="Disordered" evidence="1">
    <location>
        <begin position="62"/>
        <end position="87"/>
    </location>
</feature>
<feature type="region of interest" description="Disordered" evidence="1">
    <location>
        <begin position="197"/>
        <end position="464"/>
    </location>
</feature>
<feature type="region of interest" description="Disordered" evidence="1">
    <location>
        <begin position="493"/>
        <end position="560"/>
    </location>
</feature>
<feature type="compositionally biased region" description="Polar residues" evidence="1">
    <location>
        <begin position="1"/>
        <end position="11"/>
    </location>
</feature>
<feature type="compositionally biased region" description="Low complexity" evidence="1">
    <location>
        <begin position="247"/>
        <end position="264"/>
    </location>
</feature>
<feature type="compositionally biased region" description="Polar residues" evidence="1">
    <location>
        <begin position="274"/>
        <end position="288"/>
    </location>
</feature>
<feature type="compositionally biased region" description="Basic and acidic residues" evidence="1">
    <location>
        <begin position="294"/>
        <end position="430"/>
    </location>
</feature>
<feature type="compositionally biased region" description="Low complexity" evidence="1">
    <location>
        <begin position="434"/>
        <end position="464"/>
    </location>
</feature>
<feature type="compositionally biased region" description="Low complexity" evidence="1">
    <location>
        <begin position="493"/>
        <end position="554"/>
    </location>
</feature>
<proteinExistence type="predicted"/>